<keyword id="KW-0028">Amino-acid biosynthesis</keyword>
<keyword id="KW-0057">Aromatic amino acid biosynthesis</keyword>
<keyword id="KW-0274">FAD</keyword>
<keyword id="KW-0285">Flavoprotein</keyword>
<keyword id="KW-0288">FMN</keyword>
<keyword id="KW-0456">Lyase</keyword>
<keyword id="KW-0521">NADP</keyword>
<comment type="function">
    <text evidence="1">Catalyzes the anti-1,4-elimination of the C-3 phosphate and the C-6 proR hydrogen from 5-enolpyruvylshikimate-3-phosphate (EPSP) to yield chorismate, which is the branch point compound that serves as the starting substrate for the three terminal pathways of aromatic amino acid biosynthesis. This reaction introduces a second double bond into the aromatic ring system.</text>
</comment>
<comment type="catalytic activity">
    <reaction evidence="1">
        <text>5-O-(1-carboxyvinyl)-3-phosphoshikimate = chorismate + phosphate</text>
        <dbReference type="Rhea" id="RHEA:21020"/>
        <dbReference type="ChEBI" id="CHEBI:29748"/>
        <dbReference type="ChEBI" id="CHEBI:43474"/>
        <dbReference type="ChEBI" id="CHEBI:57701"/>
        <dbReference type="EC" id="4.2.3.5"/>
    </reaction>
</comment>
<comment type="cofactor">
    <cofactor evidence="1">
        <name>FMNH2</name>
        <dbReference type="ChEBI" id="CHEBI:57618"/>
    </cofactor>
    <text evidence="1">Reduced FMN (FMNH(2)).</text>
</comment>
<comment type="pathway">
    <text evidence="1">Metabolic intermediate biosynthesis; chorismate biosynthesis; chorismate from D-erythrose 4-phosphate and phosphoenolpyruvate: step 7/7.</text>
</comment>
<comment type="subunit">
    <text evidence="1">Homotetramer.</text>
</comment>
<comment type="similarity">
    <text evidence="1">Belongs to the chorismate synthase family.</text>
</comment>
<sequence length="388" mass="42497">MRYLTAGESHGPRLTAIIEGVPAGLPLTAEDINEELKRRQGGYGRGSRMQIETDRVEITAGVRHGKTTGAPITLNVTNKDHQKWLDIMAVEDIEEKLKSKRRIKHPRPGHADLVGGMKYRFDDLRNSLERSSARETTMRVAVGAVAKRILAELDIEIANHVVVFGGKEIDVPDGLSVAEIKERAAQSEVSIVNQEREEEIKAYIDQIKRDGDTIGGVIETVVGGVPAGLGSYVQWDKKLDAKLAQAVVSINAFKGVEFGVGFQAGYLKGSQVMDEILWSQEKGYTRRTNNLGGFEGGMTNGEALIIRGVMKPIPTLYKPLMSVDIDTHEPYKATVERSDPTALPAAGVVMESVVATTLATEILEKFSSDNMEELKAAVASHRDYVKNF</sequence>
<dbReference type="EC" id="4.2.3.5" evidence="1"/>
<dbReference type="EMBL" id="CP000408">
    <property type="protein sequence ID" value="ABP92435.1"/>
    <property type="molecule type" value="Genomic_DNA"/>
</dbReference>
<dbReference type="SMR" id="A4W246"/>
<dbReference type="KEGG" id="ssv:SSU98_1277"/>
<dbReference type="HOGENOM" id="CLU_034547_2_0_9"/>
<dbReference type="UniPathway" id="UPA00053">
    <property type="reaction ID" value="UER00090"/>
</dbReference>
<dbReference type="GO" id="GO:0005829">
    <property type="term" value="C:cytosol"/>
    <property type="evidence" value="ECO:0007669"/>
    <property type="project" value="TreeGrafter"/>
</dbReference>
<dbReference type="GO" id="GO:0004107">
    <property type="term" value="F:chorismate synthase activity"/>
    <property type="evidence" value="ECO:0007669"/>
    <property type="project" value="UniProtKB-UniRule"/>
</dbReference>
<dbReference type="GO" id="GO:0010181">
    <property type="term" value="F:FMN binding"/>
    <property type="evidence" value="ECO:0007669"/>
    <property type="project" value="TreeGrafter"/>
</dbReference>
<dbReference type="GO" id="GO:0008652">
    <property type="term" value="P:amino acid biosynthetic process"/>
    <property type="evidence" value="ECO:0007669"/>
    <property type="project" value="UniProtKB-KW"/>
</dbReference>
<dbReference type="GO" id="GO:0009073">
    <property type="term" value="P:aromatic amino acid family biosynthetic process"/>
    <property type="evidence" value="ECO:0007669"/>
    <property type="project" value="UniProtKB-KW"/>
</dbReference>
<dbReference type="GO" id="GO:0009423">
    <property type="term" value="P:chorismate biosynthetic process"/>
    <property type="evidence" value="ECO:0007669"/>
    <property type="project" value="UniProtKB-UniRule"/>
</dbReference>
<dbReference type="CDD" id="cd07304">
    <property type="entry name" value="Chorismate_synthase"/>
    <property type="match status" value="1"/>
</dbReference>
<dbReference type="FunFam" id="3.60.150.10:FF:000002">
    <property type="entry name" value="Chorismate synthase"/>
    <property type="match status" value="1"/>
</dbReference>
<dbReference type="Gene3D" id="3.60.150.10">
    <property type="entry name" value="Chorismate synthase AroC"/>
    <property type="match status" value="1"/>
</dbReference>
<dbReference type="HAMAP" id="MF_00300">
    <property type="entry name" value="Chorismate_synth"/>
    <property type="match status" value="1"/>
</dbReference>
<dbReference type="InterPro" id="IPR000453">
    <property type="entry name" value="Chorismate_synth"/>
</dbReference>
<dbReference type="InterPro" id="IPR035904">
    <property type="entry name" value="Chorismate_synth_AroC_sf"/>
</dbReference>
<dbReference type="InterPro" id="IPR020541">
    <property type="entry name" value="Chorismate_synthase_CS"/>
</dbReference>
<dbReference type="NCBIfam" id="TIGR00033">
    <property type="entry name" value="aroC"/>
    <property type="match status" value="1"/>
</dbReference>
<dbReference type="NCBIfam" id="NF003793">
    <property type="entry name" value="PRK05382.1"/>
    <property type="match status" value="1"/>
</dbReference>
<dbReference type="PANTHER" id="PTHR21085">
    <property type="entry name" value="CHORISMATE SYNTHASE"/>
    <property type="match status" value="1"/>
</dbReference>
<dbReference type="PANTHER" id="PTHR21085:SF0">
    <property type="entry name" value="CHORISMATE SYNTHASE"/>
    <property type="match status" value="1"/>
</dbReference>
<dbReference type="Pfam" id="PF01264">
    <property type="entry name" value="Chorismate_synt"/>
    <property type="match status" value="1"/>
</dbReference>
<dbReference type="PIRSF" id="PIRSF001456">
    <property type="entry name" value="Chorismate_synth"/>
    <property type="match status" value="1"/>
</dbReference>
<dbReference type="SUPFAM" id="SSF103263">
    <property type="entry name" value="Chorismate synthase, AroC"/>
    <property type="match status" value="1"/>
</dbReference>
<dbReference type="PROSITE" id="PS00787">
    <property type="entry name" value="CHORISMATE_SYNTHASE_1"/>
    <property type="match status" value="1"/>
</dbReference>
<dbReference type="PROSITE" id="PS00788">
    <property type="entry name" value="CHORISMATE_SYNTHASE_2"/>
    <property type="match status" value="1"/>
</dbReference>
<dbReference type="PROSITE" id="PS00789">
    <property type="entry name" value="CHORISMATE_SYNTHASE_3"/>
    <property type="match status" value="1"/>
</dbReference>
<name>AROC_STRS2</name>
<reference key="1">
    <citation type="journal article" date="2007" name="PLoS ONE">
        <title>A glimpse of streptococcal toxic shock syndrome from comparative genomics of S. suis 2 Chinese isolates.</title>
        <authorList>
            <person name="Chen C."/>
            <person name="Tang J."/>
            <person name="Dong W."/>
            <person name="Wang C."/>
            <person name="Feng Y."/>
            <person name="Wang J."/>
            <person name="Zheng F."/>
            <person name="Pan X."/>
            <person name="Liu D."/>
            <person name="Li M."/>
            <person name="Song Y."/>
            <person name="Zhu X."/>
            <person name="Sun H."/>
            <person name="Feng T."/>
            <person name="Guo Z."/>
            <person name="Ju A."/>
            <person name="Ge J."/>
            <person name="Dong Y."/>
            <person name="Sun W."/>
            <person name="Jiang Y."/>
            <person name="Wang J."/>
            <person name="Yan J."/>
            <person name="Yang H."/>
            <person name="Wang X."/>
            <person name="Gao G.F."/>
            <person name="Yang R."/>
            <person name="Wang J."/>
            <person name="Yu J."/>
        </authorList>
    </citation>
    <scope>NUCLEOTIDE SEQUENCE [LARGE SCALE GENOMIC DNA]</scope>
    <source>
        <strain>98HAH33</strain>
    </source>
</reference>
<organism>
    <name type="scientific">Streptococcus suis (strain 98HAH33)</name>
    <dbReference type="NCBI Taxonomy" id="391296"/>
    <lineage>
        <taxon>Bacteria</taxon>
        <taxon>Bacillati</taxon>
        <taxon>Bacillota</taxon>
        <taxon>Bacilli</taxon>
        <taxon>Lactobacillales</taxon>
        <taxon>Streptococcaceae</taxon>
        <taxon>Streptococcus</taxon>
    </lineage>
</organism>
<gene>
    <name evidence="1" type="primary">aroC</name>
    <name type="ordered locus">SSU98_1277</name>
</gene>
<feature type="chain" id="PRO_1000022561" description="Chorismate synthase">
    <location>
        <begin position="1"/>
        <end position="388"/>
    </location>
</feature>
<feature type="binding site" evidence="1">
    <location>
        <position position="39"/>
    </location>
    <ligand>
        <name>NADP(+)</name>
        <dbReference type="ChEBI" id="CHEBI:58349"/>
    </ligand>
</feature>
<feature type="binding site" evidence="1">
    <location>
        <position position="45"/>
    </location>
    <ligand>
        <name>NADP(+)</name>
        <dbReference type="ChEBI" id="CHEBI:58349"/>
    </ligand>
</feature>
<feature type="binding site" evidence="1">
    <location>
        <begin position="130"/>
        <end position="132"/>
    </location>
    <ligand>
        <name>FMN</name>
        <dbReference type="ChEBI" id="CHEBI:58210"/>
    </ligand>
</feature>
<feature type="binding site" evidence="1">
    <location>
        <begin position="251"/>
        <end position="252"/>
    </location>
    <ligand>
        <name>FMN</name>
        <dbReference type="ChEBI" id="CHEBI:58210"/>
    </ligand>
</feature>
<feature type="binding site" evidence="1">
    <location>
        <position position="296"/>
    </location>
    <ligand>
        <name>FMN</name>
        <dbReference type="ChEBI" id="CHEBI:58210"/>
    </ligand>
</feature>
<feature type="binding site" evidence="1">
    <location>
        <begin position="311"/>
        <end position="315"/>
    </location>
    <ligand>
        <name>FMN</name>
        <dbReference type="ChEBI" id="CHEBI:58210"/>
    </ligand>
</feature>
<feature type="binding site" evidence="1">
    <location>
        <position position="337"/>
    </location>
    <ligand>
        <name>FMN</name>
        <dbReference type="ChEBI" id="CHEBI:58210"/>
    </ligand>
</feature>
<accession>A4W246</accession>
<proteinExistence type="inferred from homology"/>
<evidence type="ECO:0000255" key="1">
    <source>
        <dbReference type="HAMAP-Rule" id="MF_00300"/>
    </source>
</evidence>
<protein>
    <recommendedName>
        <fullName evidence="1">Chorismate synthase</fullName>
        <shortName evidence="1">CS</shortName>
        <ecNumber evidence="1">4.2.3.5</ecNumber>
    </recommendedName>
    <alternativeName>
        <fullName evidence="1">5-enolpyruvylshikimate-3-phosphate phospholyase</fullName>
    </alternativeName>
</protein>